<name>DEOC_STRP7</name>
<comment type="function">
    <text evidence="1">Catalyzes a reversible aldol reaction between acetaldehyde and D-glyceraldehyde 3-phosphate to generate 2-deoxy-D-ribose 5-phosphate.</text>
</comment>
<comment type="catalytic activity">
    <reaction evidence="1">
        <text>2-deoxy-D-ribose 5-phosphate = D-glyceraldehyde 3-phosphate + acetaldehyde</text>
        <dbReference type="Rhea" id="RHEA:12821"/>
        <dbReference type="ChEBI" id="CHEBI:15343"/>
        <dbReference type="ChEBI" id="CHEBI:59776"/>
        <dbReference type="ChEBI" id="CHEBI:62877"/>
        <dbReference type="EC" id="4.1.2.4"/>
    </reaction>
</comment>
<comment type="pathway">
    <text evidence="1">Carbohydrate degradation; 2-deoxy-D-ribose 1-phosphate degradation; D-glyceraldehyde 3-phosphate and acetaldehyde from 2-deoxy-alpha-D-ribose 1-phosphate: step 2/2.</text>
</comment>
<comment type="subcellular location">
    <subcellularLocation>
        <location evidence="1">Cytoplasm</location>
    </subcellularLocation>
</comment>
<comment type="similarity">
    <text evidence="1">Belongs to the DeoC/FbaB aldolase family. DeoC type 1 subfamily.</text>
</comment>
<feature type="chain" id="PRO_1000189834" description="Deoxyribose-phosphate aldolase">
    <location>
        <begin position="1"/>
        <end position="220"/>
    </location>
</feature>
<feature type="active site" description="Proton donor/acceptor" evidence="1">
    <location>
        <position position="89"/>
    </location>
</feature>
<feature type="active site" description="Schiff-base intermediate with acetaldehyde" evidence="1">
    <location>
        <position position="151"/>
    </location>
</feature>
<feature type="active site" description="Proton donor/acceptor" evidence="1">
    <location>
        <position position="180"/>
    </location>
</feature>
<proteinExistence type="inferred from homology"/>
<organism>
    <name type="scientific">Streptococcus pneumoniae (strain 70585)</name>
    <dbReference type="NCBI Taxonomy" id="488221"/>
    <lineage>
        <taxon>Bacteria</taxon>
        <taxon>Bacillati</taxon>
        <taxon>Bacillota</taxon>
        <taxon>Bacilli</taxon>
        <taxon>Lactobacillales</taxon>
        <taxon>Streptococcaceae</taxon>
        <taxon>Streptococcus</taxon>
    </lineage>
</organism>
<gene>
    <name evidence="1" type="primary">deoC</name>
    <name type="ordered locus">SP70585_0879</name>
</gene>
<sequence>MKLNKYIDHTLLKQDAKKKQIDSLLSEAREYGFASVCVNPTWVEHAKKGLEGTDVKVCTVVGFPLGATTSAVKAFETKEAIQNGADEIDMVINVGALKSGNLALVESDIRAVVEASGDKLVKVIIEACLLTDQEKVVVCQLAQKAGADCVKTSTGFSTGGATIADVTLMRETVGSDMGVKAAGGARSYADALAFVEAGATRIGTSAGVAILKGELADGDY</sequence>
<accession>C1C6H7</accession>
<protein>
    <recommendedName>
        <fullName evidence="1">Deoxyribose-phosphate aldolase</fullName>
        <shortName evidence="1">DERA</shortName>
        <ecNumber evidence="1">4.1.2.4</ecNumber>
    </recommendedName>
    <alternativeName>
        <fullName evidence="1">2-deoxy-D-ribose 5-phosphate aldolase</fullName>
    </alternativeName>
    <alternativeName>
        <fullName evidence="1">Phosphodeoxyriboaldolase</fullName>
        <shortName evidence="1">Deoxyriboaldolase</shortName>
    </alternativeName>
</protein>
<dbReference type="EC" id="4.1.2.4" evidence="1"/>
<dbReference type="EMBL" id="CP000918">
    <property type="protein sequence ID" value="ACO17598.1"/>
    <property type="molecule type" value="Genomic_DNA"/>
</dbReference>
<dbReference type="RefSeq" id="WP_000773686.1">
    <property type="nucleotide sequence ID" value="NC_012468.1"/>
</dbReference>
<dbReference type="SMR" id="C1C6H7"/>
<dbReference type="KEGG" id="snm:SP70585_0879"/>
<dbReference type="HOGENOM" id="CLU_053595_0_1_9"/>
<dbReference type="UniPathway" id="UPA00002">
    <property type="reaction ID" value="UER00468"/>
</dbReference>
<dbReference type="Proteomes" id="UP000002211">
    <property type="component" value="Chromosome"/>
</dbReference>
<dbReference type="GO" id="GO:0005737">
    <property type="term" value="C:cytoplasm"/>
    <property type="evidence" value="ECO:0007669"/>
    <property type="project" value="UniProtKB-SubCell"/>
</dbReference>
<dbReference type="GO" id="GO:0004139">
    <property type="term" value="F:deoxyribose-phosphate aldolase activity"/>
    <property type="evidence" value="ECO:0007669"/>
    <property type="project" value="UniProtKB-UniRule"/>
</dbReference>
<dbReference type="GO" id="GO:0006018">
    <property type="term" value="P:2-deoxyribose 1-phosphate catabolic process"/>
    <property type="evidence" value="ECO:0007669"/>
    <property type="project" value="UniProtKB-UniRule"/>
</dbReference>
<dbReference type="GO" id="GO:0016052">
    <property type="term" value="P:carbohydrate catabolic process"/>
    <property type="evidence" value="ECO:0007669"/>
    <property type="project" value="TreeGrafter"/>
</dbReference>
<dbReference type="GO" id="GO:0009264">
    <property type="term" value="P:deoxyribonucleotide catabolic process"/>
    <property type="evidence" value="ECO:0007669"/>
    <property type="project" value="InterPro"/>
</dbReference>
<dbReference type="CDD" id="cd00959">
    <property type="entry name" value="DeoC"/>
    <property type="match status" value="1"/>
</dbReference>
<dbReference type="FunFam" id="3.20.20.70:FF:000044">
    <property type="entry name" value="Deoxyribose-phosphate aldolase"/>
    <property type="match status" value="1"/>
</dbReference>
<dbReference type="Gene3D" id="3.20.20.70">
    <property type="entry name" value="Aldolase class I"/>
    <property type="match status" value="1"/>
</dbReference>
<dbReference type="HAMAP" id="MF_00114">
    <property type="entry name" value="DeoC_type1"/>
    <property type="match status" value="1"/>
</dbReference>
<dbReference type="InterPro" id="IPR013785">
    <property type="entry name" value="Aldolase_TIM"/>
</dbReference>
<dbReference type="InterPro" id="IPR011343">
    <property type="entry name" value="DeoC"/>
</dbReference>
<dbReference type="InterPro" id="IPR002915">
    <property type="entry name" value="DeoC/FbaB/LacD_aldolase"/>
</dbReference>
<dbReference type="InterPro" id="IPR028581">
    <property type="entry name" value="DeoC_typeI"/>
</dbReference>
<dbReference type="NCBIfam" id="TIGR00126">
    <property type="entry name" value="deoC"/>
    <property type="match status" value="1"/>
</dbReference>
<dbReference type="PANTHER" id="PTHR10889">
    <property type="entry name" value="DEOXYRIBOSE-PHOSPHATE ALDOLASE"/>
    <property type="match status" value="1"/>
</dbReference>
<dbReference type="PANTHER" id="PTHR10889:SF1">
    <property type="entry name" value="DEOXYRIBOSE-PHOSPHATE ALDOLASE"/>
    <property type="match status" value="1"/>
</dbReference>
<dbReference type="Pfam" id="PF01791">
    <property type="entry name" value="DeoC"/>
    <property type="match status" value="1"/>
</dbReference>
<dbReference type="PIRSF" id="PIRSF001357">
    <property type="entry name" value="DeoC"/>
    <property type="match status" value="1"/>
</dbReference>
<dbReference type="SMART" id="SM01133">
    <property type="entry name" value="DeoC"/>
    <property type="match status" value="1"/>
</dbReference>
<dbReference type="SUPFAM" id="SSF51569">
    <property type="entry name" value="Aldolase"/>
    <property type="match status" value="1"/>
</dbReference>
<keyword id="KW-0963">Cytoplasm</keyword>
<keyword id="KW-0456">Lyase</keyword>
<keyword id="KW-0704">Schiff base</keyword>
<evidence type="ECO:0000255" key="1">
    <source>
        <dbReference type="HAMAP-Rule" id="MF_00114"/>
    </source>
</evidence>
<reference key="1">
    <citation type="journal article" date="2010" name="Genome Biol.">
        <title>Structure and dynamics of the pan-genome of Streptococcus pneumoniae and closely related species.</title>
        <authorList>
            <person name="Donati C."/>
            <person name="Hiller N.L."/>
            <person name="Tettelin H."/>
            <person name="Muzzi A."/>
            <person name="Croucher N.J."/>
            <person name="Angiuoli S.V."/>
            <person name="Oggioni M."/>
            <person name="Dunning Hotopp J.C."/>
            <person name="Hu F.Z."/>
            <person name="Riley D.R."/>
            <person name="Covacci A."/>
            <person name="Mitchell T.J."/>
            <person name="Bentley S.D."/>
            <person name="Kilian M."/>
            <person name="Ehrlich G.D."/>
            <person name="Rappuoli R."/>
            <person name="Moxon E.R."/>
            <person name="Masignani V."/>
        </authorList>
    </citation>
    <scope>NUCLEOTIDE SEQUENCE [LARGE SCALE GENOMIC DNA]</scope>
    <source>
        <strain>70585</strain>
    </source>
</reference>